<feature type="chain" id="PRO_0000352623" description="D-galactonate dehydratase">
    <location>
        <begin position="1"/>
        <end position="382"/>
    </location>
</feature>
<feature type="active site" description="Proton donor" evidence="1">
    <location>
        <position position="185"/>
    </location>
</feature>
<feature type="active site" description="Proton acceptor" evidence="1">
    <location>
        <position position="285"/>
    </location>
</feature>
<feature type="binding site" evidence="2">
    <location>
        <position position="183"/>
    </location>
    <ligand>
        <name>Mg(2+)</name>
        <dbReference type="ChEBI" id="CHEBI:18420"/>
    </ligand>
</feature>
<feature type="binding site" evidence="2">
    <location>
        <position position="209"/>
    </location>
    <ligand>
        <name>Mg(2+)</name>
        <dbReference type="ChEBI" id="CHEBI:18420"/>
    </ligand>
</feature>
<feature type="binding site" evidence="2">
    <location>
        <position position="235"/>
    </location>
    <ligand>
        <name>Mg(2+)</name>
        <dbReference type="ChEBI" id="CHEBI:18420"/>
    </ligand>
</feature>
<feature type="site" description="Increases basicity of active site His" evidence="2">
    <location>
        <position position="258"/>
    </location>
</feature>
<feature type="site" description="Transition state stabilizer" evidence="2">
    <location>
        <position position="310"/>
    </location>
</feature>
<proteinExistence type="inferred from homology"/>
<accession>B1X9C1</accession>
<name>DGOD_ECODH</name>
<dbReference type="EC" id="4.2.1.6" evidence="2"/>
<dbReference type="EMBL" id="CP000948">
    <property type="protein sequence ID" value="ACB04737.1"/>
    <property type="molecule type" value="Genomic_DNA"/>
</dbReference>
<dbReference type="RefSeq" id="WP_000705001.1">
    <property type="nucleotide sequence ID" value="NC_010473.1"/>
</dbReference>
<dbReference type="SMR" id="B1X9C1"/>
<dbReference type="GeneID" id="75205406"/>
<dbReference type="KEGG" id="ecd:ECDH10B_3878"/>
<dbReference type="HOGENOM" id="CLU_030273_3_2_6"/>
<dbReference type="UniPathway" id="UPA00081">
    <property type="reaction ID" value="UER00518"/>
</dbReference>
<dbReference type="GO" id="GO:0008869">
    <property type="term" value="F:galactonate dehydratase activity"/>
    <property type="evidence" value="ECO:0007669"/>
    <property type="project" value="UniProtKB-UniRule"/>
</dbReference>
<dbReference type="GO" id="GO:0000287">
    <property type="term" value="F:magnesium ion binding"/>
    <property type="evidence" value="ECO:0007669"/>
    <property type="project" value="UniProtKB-UniRule"/>
</dbReference>
<dbReference type="GO" id="GO:0009063">
    <property type="term" value="P:amino acid catabolic process"/>
    <property type="evidence" value="ECO:0007669"/>
    <property type="project" value="InterPro"/>
</dbReference>
<dbReference type="GO" id="GO:0034194">
    <property type="term" value="P:D-galactonate catabolic process"/>
    <property type="evidence" value="ECO:0007669"/>
    <property type="project" value="UniProtKB-UniRule"/>
</dbReference>
<dbReference type="CDD" id="cd03325">
    <property type="entry name" value="D-galactonate_dehydratase"/>
    <property type="match status" value="1"/>
</dbReference>
<dbReference type="FunFam" id="3.20.20.120:FF:000008">
    <property type="entry name" value="D-galactonate dehydratase"/>
    <property type="match status" value="1"/>
</dbReference>
<dbReference type="FunFam" id="3.30.390.10:FF:000003">
    <property type="entry name" value="D-galactonate dehydratase"/>
    <property type="match status" value="1"/>
</dbReference>
<dbReference type="Gene3D" id="3.20.20.120">
    <property type="entry name" value="Enolase-like C-terminal domain"/>
    <property type="match status" value="1"/>
</dbReference>
<dbReference type="Gene3D" id="3.30.390.10">
    <property type="entry name" value="Enolase-like, N-terminal domain"/>
    <property type="match status" value="1"/>
</dbReference>
<dbReference type="HAMAP" id="MF_01289">
    <property type="entry name" value="Galacton_dehydrat"/>
    <property type="match status" value="1"/>
</dbReference>
<dbReference type="InterPro" id="IPR034593">
    <property type="entry name" value="DgoD-like"/>
</dbReference>
<dbReference type="InterPro" id="IPR036849">
    <property type="entry name" value="Enolase-like_C_sf"/>
</dbReference>
<dbReference type="InterPro" id="IPR029017">
    <property type="entry name" value="Enolase-like_N"/>
</dbReference>
<dbReference type="InterPro" id="IPR029065">
    <property type="entry name" value="Enolase_C-like"/>
</dbReference>
<dbReference type="InterPro" id="IPR023592">
    <property type="entry name" value="Galactonate_deHydtase"/>
</dbReference>
<dbReference type="InterPro" id="IPR018110">
    <property type="entry name" value="Mandel_Rmase/mucon_lact_enz_CS"/>
</dbReference>
<dbReference type="InterPro" id="IPR013342">
    <property type="entry name" value="Mandelate_racemase_C"/>
</dbReference>
<dbReference type="InterPro" id="IPR013341">
    <property type="entry name" value="Mandelate_racemase_N_dom"/>
</dbReference>
<dbReference type="NCBIfam" id="NF010624">
    <property type="entry name" value="PRK14017.1"/>
    <property type="match status" value="1"/>
</dbReference>
<dbReference type="PANTHER" id="PTHR48080:SF2">
    <property type="entry name" value="D-GALACTONATE DEHYDRATASE"/>
    <property type="match status" value="1"/>
</dbReference>
<dbReference type="PANTHER" id="PTHR48080">
    <property type="entry name" value="D-GALACTONATE DEHYDRATASE-RELATED"/>
    <property type="match status" value="1"/>
</dbReference>
<dbReference type="Pfam" id="PF13378">
    <property type="entry name" value="MR_MLE_C"/>
    <property type="match status" value="1"/>
</dbReference>
<dbReference type="Pfam" id="PF02746">
    <property type="entry name" value="MR_MLE_N"/>
    <property type="match status" value="1"/>
</dbReference>
<dbReference type="SFLD" id="SFLDF00003">
    <property type="entry name" value="D-galactonate_dehydratase"/>
    <property type="match status" value="1"/>
</dbReference>
<dbReference type="SFLD" id="SFLDS00001">
    <property type="entry name" value="Enolase"/>
    <property type="match status" value="1"/>
</dbReference>
<dbReference type="SMART" id="SM00922">
    <property type="entry name" value="MR_MLE"/>
    <property type="match status" value="1"/>
</dbReference>
<dbReference type="SUPFAM" id="SSF51604">
    <property type="entry name" value="Enolase C-terminal domain-like"/>
    <property type="match status" value="1"/>
</dbReference>
<dbReference type="SUPFAM" id="SSF54826">
    <property type="entry name" value="Enolase N-terminal domain-like"/>
    <property type="match status" value="1"/>
</dbReference>
<dbReference type="PROSITE" id="PS00908">
    <property type="entry name" value="MR_MLE_1"/>
    <property type="match status" value="1"/>
</dbReference>
<dbReference type="PROSITE" id="PS00909">
    <property type="entry name" value="MR_MLE_2"/>
    <property type="match status" value="1"/>
</dbReference>
<evidence type="ECO:0000250" key="1"/>
<evidence type="ECO:0000255" key="2">
    <source>
        <dbReference type="HAMAP-Rule" id="MF_01289"/>
    </source>
</evidence>
<organism>
    <name type="scientific">Escherichia coli (strain K12 / DH10B)</name>
    <dbReference type="NCBI Taxonomy" id="316385"/>
    <lineage>
        <taxon>Bacteria</taxon>
        <taxon>Pseudomonadati</taxon>
        <taxon>Pseudomonadota</taxon>
        <taxon>Gammaproteobacteria</taxon>
        <taxon>Enterobacterales</taxon>
        <taxon>Enterobacteriaceae</taxon>
        <taxon>Escherichia</taxon>
    </lineage>
</organism>
<reference key="1">
    <citation type="journal article" date="2008" name="J. Bacteriol.">
        <title>The complete genome sequence of Escherichia coli DH10B: insights into the biology of a laboratory workhorse.</title>
        <authorList>
            <person name="Durfee T."/>
            <person name="Nelson R."/>
            <person name="Baldwin S."/>
            <person name="Plunkett G. III"/>
            <person name="Burland V."/>
            <person name="Mau B."/>
            <person name="Petrosino J.F."/>
            <person name="Qin X."/>
            <person name="Muzny D.M."/>
            <person name="Ayele M."/>
            <person name="Gibbs R.A."/>
            <person name="Csorgo B."/>
            <person name="Posfai G."/>
            <person name="Weinstock G.M."/>
            <person name="Blattner F.R."/>
        </authorList>
    </citation>
    <scope>NUCLEOTIDE SEQUENCE [LARGE SCALE GENOMIC DNA]</scope>
    <source>
        <strain>K12 / DH10B</strain>
    </source>
</reference>
<comment type="function">
    <text evidence="2">Catalyzes the dehydration of D-galactonate to 2-keto-3-deoxy-D-galactonate.</text>
</comment>
<comment type="catalytic activity">
    <reaction evidence="2">
        <text>D-galactonate = 2-dehydro-3-deoxy-D-galactonate + H2O</text>
        <dbReference type="Rhea" id="RHEA:18649"/>
        <dbReference type="ChEBI" id="CHEBI:12931"/>
        <dbReference type="ChEBI" id="CHEBI:15377"/>
        <dbReference type="ChEBI" id="CHEBI:57989"/>
        <dbReference type="EC" id="4.2.1.6"/>
    </reaction>
</comment>
<comment type="cofactor">
    <cofactor evidence="2">
        <name>Mg(2+)</name>
        <dbReference type="ChEBI" id="CHEBI:18420"/>
    </cofactor>
    <text evidence="2">Binds 1 Mg(2+) ion per subunit.</text>
</comment>
<comment type="pathway">
    <text evidence="2">Carbohydrate acid metabolism; D-galactonate degradation; D-glyceraldehyde 3-phosphate and pyruvate from D-galactonate: step 1/3.</text>
</comment>
<comment type="miscellaneous">
    <text evidence="2">Reaction proceeds via an anti dehydration.</text>
</comment>
<comment type="similarity">
    <text evidence="2">Belongs to the mandelate racemase/muconate lactonizing enzyme family. GalD subfamily.</text>
</comment>
<gene>
    <name evidence="2" type="primary">dgoD</name>
    <name type="ordered locus">ECDH10B_3878</name>
</gene>
<protein>
    <recommendedName>
        <fullName evidence="2">D-galactonate dehydratase</fullName>
        <shortName evidence="2">GalD</shortName>
        <ecNumber evidence="2">4.2.1.6</ecNumber>
    </recommendedName>
</protein>
<sequence length="382" mass="42523">MKITKITTYRLPPRWMFLKIETDEGVVGWGEPVIEGRARTVEAAVHELGDYLIGQDPSRINDLWQVMYRAGFYRGGPILMSAIAGIDQALWDIKGKVLNAPVWQLMGGLVRDKIKAYSWVGGDRPADVIDGIKTLREIGFDTFKLNGCEELGLIDNSRAVDAAVNTVAQIREAFGNQIEFGLDFHGRVSAPMAKVLIKELEPYRPLFIEEPVLAEQAEYYPKLAAQTHIPLAAGERMFSRFDFKRVLEAGGISILQPDLSHAGGITECYKIAGMAEAYDVTLAPHCPLGPIALAACLHIDFVSYNAVLQEQSMGIHYNKGAELLDFVKNKEDFSMVGGFFKPLTKPGLGVEIDEAKVIEFSKNAPDWRNPLWRHEDNSVAEW</sequence>
<keyword id="KW-0456">Lyase</keyword>
<keyword id="KW-0460">Magnesium</keyword>
<keyword id="KW-0479">Metal-binding</keyword>